<dbReference type="EMBL" id="CP001172">
    <property type="protein sequence ID" value="ACJ57131.1"/>
    <property type="molecule type" value="Genomic_DNA"/>
</dbReference>
<dbReference type="RefSeq" id="WP_000908081.1">
    <property type="nucleotide sequence ID" value="NZ_CP001172.1"/>
</dbReference>
<dbReference type="SMR" id="B7H0A3"/>
<dbReference type="HOGENOM" id="CLU_086034_5_3_6"/>
<dbReference type="Proteomes" id="UP000006924">
    <property type="component" value="Chromosome"/>
</dbReference>
<dbReference type="GO" id="GO:0033281">
    <property type="term" value="C:TAT protein transport complex"/>
    <property type="evidence" value="ECO:0007669"/>
    <property type="project" value="UniProtKB-UniRule"/>
</dbReference>
<dbReference type="GO" id="GO:0008320">
    <property type="term" value="F:protein transmembrane transporter activity"/>
    <property type="evidence" value="ECO:0007669"/>
    <property type="project" value="UniProtKB-UniRule"/>
</dbReference>
<dbReference type="GO" id="GO:0043953">
    <property type="term" value="P:protein transport by the Tat complex"/>
    <property type="evidence" value="ECO:0007669"/>
    <property type="project" value="UniProtKB-UniRule"/>
</dbReference>
<dbReference type="Gene3D" id="1.20.5.3310">
    <property type="match status" value="1"/>
</dbReference>
<dbReference type="HAMAP" id="MF_00236">
    <property type="entry name" value="TatA_E"/>
    <property type="match status" value="1"/>
</dbReference>
<dbReference type="InterPro" id="IPR003369">
    <property type="entry name" value="TatA/B/E"/>
</dbReference>
<dbReference type="InterPro" id="IPR006312">
    <property type="entry name" value="TatA/E"/>
</dbReference>
<dbReference type="NCBIfam" id="TIGR01411">
    <property type="entry name" value="tatAE"/>
    <property type="match status" value="1"/>
</dbReference>
<dbReference type="PANTHER" id="PTHR42982">
    <property type="entry name" value="SEC-INDEPENDENT PROTEIN TRANSLOCASE PROTEIN TATA"/>
    <property type="match status" value="1"/>
</dbReference>
<dbReference type="PANTHER" id="PTHR42982:SF1">
    <property type="entry name" value="SEC-INDEPENDENT PROTEIN TRANSLOCASE PROTEIN TATA"/>
    <property type="match status" value="1"/>
</dbReference>
<dbReference type="Pfam" id="PF02416">
    <property type="entry name" value="TatA_B_E"/>
    <property type="match status" value="1"/>
</dbReference>
<sequence>MAGLSIWHVVIFAIVVILLFGTSKLKNIGKDVGGAVRDFKKSVREEDEAASLNSPRTIDAQVKTSESTSVKS</sequence>
<protein>
    <recommendedName>
        <fullName evidence="1">Sec-independent protein translocase protein TatA</fullName>
    </recommendedName>
</protein>
<accession>B7H0A3</accession>
<name>TATA_ACIB3</name>
<proteinExistence type="inferred from homology"/>
<reference key="1">
    <citation type="journal article" date="2008" name="J. Bacteriol.">
        <title>Comparative genome sequence analysis of multidrug-resistant Acinetobacter baumannii.</title>
        <authorList>
            <person name="Adams M.D."/>
            <person name="Goglin K."/>
            <person name="Molyneaux N."/>
            <person name="Hujer K.M."/>
            <person name="Lavender H."/>
            <person name="Jamison J.J."/>
            <person name="MacDonald I.J."/>
            <person name="Martin K.M."/>
            <person name="Russo T."/>
            <person name="Campagnari A.A."/>
            <person name="Hujer A.M."/>
            <person name="Bonomo R.A."/>
            <person name="Gill S.R."/>
        </authorList>
    </citation>
    <scope>NUCLEOTIDE SEQUENCE [LARGE SCALE GENOMIC DNA]</scope>
    <source>
        <strain>AB307-0294</strain>
    </source>
</reference>
<organism>
    <name type="scientific">Acinetobacter baumannii (strain AB307-0294)</name>
    <dbReference type="NCBI Taxonomy" id="557600"/>
    <lineage>
        <taxon>Bacteria</taxon>
        <taxon>Pseudomonadati</taxon>
        <taxon>Pseudomonadota</taxon>
        <taxon>Gammaproteobacteria</taxon>
        <taxon>Moraxellales</taxon>
        <taxon>Moraxellaceae</taxon>
        <taxon>Acinetobacter</taxon>
        <taxon>Acinetobacter calcoaceticus/baumannii complex</taxon>
    </lineage>
</organism>
<keyword id="KW-0997">Cell inner membrane</keyword>
<keyword id="KW-1003">Cell membrane</keyword>
<keyword id="KW-0472">Membrane</keyword>
<keyword id="KW-0653">Protein transport</keyword>
<keyword id="KW-0811">Translocation</keyword>
<keyword id="KW-0812">Transmembrane</keyword>
<keyword id="KW-1133">Transmembrane helix</keyword>
<keyword id="KW-0813">Transport</keyword>
<feature type="chain" id="PRO_1000125173" description="Sec-independent protein translocase protein TatA">
    <location>
        <begin position="1"/>
        <end position="72"/>
    </location>
</feature>
<feature type="transmembrane region" description="Helical" evidence="1">
    <location>
        <begin position="1"/>
        <end position="21"/>
    </location>
</feature>
<feature type="region of interest" description="Disordered" evidence="2">
    <location>
        <begin position="47"/>
        <end position="72"/>
    </location>
</feature>
<feature type="compositionally biased region" description="Polar residues" evidence="2">
    <location>
        <begin position="51"/>
        <end position="72"/>
    </location>
</feature>
<comment type="function">
    <text evidence="1">Part of the twin-arginine translocation (Tat) system that transports large folded proteins containing a characteristic twin-arginine motif in their signal peptide across membranes. TatA could form the protein-conducting channel of the Tat system.</text>
</comment>
<comment type="subunit">
    <text evidence="1">The Tat system comprises two distinct complexes: a TatABC complex, containing multiple copies of TatA, TatB and TatC subunits, and a separate TatA complex, containing only TatA subunits. Substrates initially bind to the TatABC complex, which probably triggers association of the separate TatA complex to form the active translocon.</text>
</comment>
<comment type="subcellular location">
    <subcellularLocation>
        <location evidence="1">Cell inner membrane</location>
        <topology evidence="1">Single-pass membrane protein</topology>
    </subcellularLocation>
</comment>
<comment type="similarity">
    <text evidence="1">Belongs to the TatA/E family.</text>
</comment>
<gene>
    <name evidence="1" type="primary">tatA</name>
    <name type="ordered locus">ABBFA_003067</name>
</gene>
<evidence type="ECO:0000255" key="1">
    <source>
        <dbReference type="HAMAP-Rule" id="MF_00236"/>
    </source>
</evidence>
<evidence type="ECO:0000256" key="2">
    <source>
        <dbReference type="SAM" id="MobiDB-lite"/>
    </source>
</evidence>